<comment type="function">
    <text evidence="1">DNA-dependent RNA polymerase catalyzes the transcription of DNA into RNA using the four ribonucleoside triphosphates as substrates.</text>
</comment>
<comment type="catalytic activity">
    <reaction evidence="1">
        <text>RNA(n) + a ribonucleoside 5'-triphosphate = RNA(n+1) + diphosphate</text>
        <dbReference type="Rhea" id="RHEA:21248"/>
        <dbReference type="Rhea" id="RHEA-COMP:14527"/>
        <dbReference type="Rhea" id="RHEA-COMP:17342"/>
        <dbReference type="ChEBI" id="CHEBI:33019"/>
        <dbReference type="ChEBI" id="CHEBI:61557"/>
        <dbReference type="ChEBI" id="CHEBI:140395"/>
        <dbReference type="EC" id="2.7.7.6"/>
    </reaction>
</comment>
<comment type="subunit">
    <text evidence="1">Homodimer. The RNAP catalytic core consists of 2 alpha, 1 beta, 1 beta' and 1 omega subunit. When a sigma factor is associated with the core the holoenzyme is formed, which can initiate transcription.</text>
</comment>
<comment type="domain">
    <text evidence="1">The N-terminal domain is essential for RNAP assembly and basal transcription, whereas the C-terminal domain is involved in interaction with transcriptional regulators and with upstream promoter elements.</text>
</comment>
<comment type="similarity">
    <text evidence="1">Belongs to the RNA polymerase alpha chain family.</text>
</comment>
<dbReference type="EC" id="2.7.7.6" evidence="1"/>
<dbReference type="EMBL" id="AE001437">
    <property type="protein sequence ID" value="AAK81044.1"/>
    <property type="molecule type" value="Genomic_DNA"/>
</dbReference>
<dbReference type="PIR" id="A97282">
    <property type="entry name" value="A97282"/>
</dbReference>
<dbReference type="RefSeq" id="NP_349704.1">
    <property type="nucleotide sequence ID" value="NC_003030.1"/>
</dbReference>
<dbReference type="RefSeq" id="WP_010966385.1">
    <property type="nucleotide sequence ID" value="NC_003030.1"/>
</dbReference>
<dbReference type="SMR" id="Q97EK6"/>
<dbReference type="STRING" id="272562.CA_C3104"/>
<dbReference type="KEGG" id="cac:CA_C3104"/>
<dbReference type="PATRIC" id="fig|272562.8.peg.3287"/>
<dbReference type="eggNOG" id="COG0202">
    <property type="taxonomic scope" value="Bacteria"/>
</dbReference>
<dbReference type="HOGENOM" id="CLU_053084_0_1_9"/>
<dbReference type="OrthoDB" id="9805706at2"/>
<dbReference type="Proteomes" id="UP000000814">
    <property type="component" value="Chromosome"/>
</dbReference>
<dbReference type="GO" id="GO:0005737">
    <property type="term" value="C:cytoplasm"/>
    <property type="evidence" value="ECO:0007669"/>
    <property type="project" value="UniProtKB-ARBA"/>
</dbReference>
<dbReference type="GO" id="GO:0000428">
    <property type="term" value="C:DNA-directed RNA polymerase complex"/>
    <property type="evidence" value="ECO:0007669"/>
    <property type="project" value="UniProtKB-KW"/>
</dbReference>
<dbReference type="GO" id="GO:0003677">
    <property type="term" value="F:DNA binding"/>
    <property type="evidence" value="ECO:0007669"/>
    <property type="project" value="UniProtKB-UniRule"/>
</dbReference>
<dbReference type="GO" id="GO:0003899">
    <property type="term" value="F:DNA-directed RNA polymerase activity"/>
    <property type="evidence" value="ECO:0007669"/>
    <property type="project" value="UniProtKB-UniRule"/>
</dbReference>
<dbReference type="GO" id="GO:0046983">
    <property type="term" value="F:protein dimerization activity"/>
    <property type="evidence" value="ECO:0007669"/>
    <property type="project" value="InterPro"/>
</dbReference>
<dbReference type="GO" id="GO:0006351">
    <property type="term" value="P:DNA-templated transcription"/>
    <property type="evidence" value="ECO:0007669"/>
    <property type="project" value="UniProtKB-UniRule"/>
</dbReference>
<dbReference type="CDD" id="cd06928">
    <property type="entry name" value="RNAP_alpha_NTD"/>
    <property type="match status" value="1"/>
</dbReference>
<dbReference type="FunFam" id="1.10.150.20:FF:000001">
    <property type="entry name" value="DNA-directed RNA polymerase subunit alpha"/>
    <property type="match status" value="1"/>
</dbReference>
<dbReference type="FunFam" id="2.170.120.12:FF:000001">
    <property type="entry name" value="DNA-directed RNA polymerase subunit alpha"/>
    <property type="match status" value="1"/>
</dbReference>
<dbReference type="Gene3D" id="1.10.150.20">
    <property type="entry name" value="5' to 3' exonuclease, C-terminal subdomain"/>
    <property type="match status" value="1"/>
</dbReference>
<dbReference type="Gene3D" id="2.170.120.12">
    <property type="entry name" value="DNA-directed RNA polymerase, insert domain"/>
    <property type="match status" value="1"/>
</dbReference>
<dbReference type="Gene3D" id="3.30.1360.10">
    <property type="entry name" value="RNA polymerase, RBP11-like subunit"/>
    <property type="match status" value="1"/>
</dbReference>
<dbReference type="HAMAP" id="MF_00059">
    <property type="entry name" value="RNApol_bact_RpoA"/>
    <property type="match status" value="1"/>
</dbReference>
<dbReference type="InterPro" id="IPR011262">
    <property type="entry name" value="DNA-dir_RNA_pol_insert"/>
</dbReference>
<dbReference type="InterPro" id="IPR011263">
    <property type="entry name" value="DNA-dir_RNA_pol_RpoA/D/Rpb3"/>
</dbReference>
<dbReference type="InterPro" id="IPR011773">
    <property type="entry name" value="DNA-dir_RpoA"/>
</dbReference>
<dbReference type="InterPro" id="IPR036603">
    <property type="entry name" value="RBP11-like"/>
</dbReference>
<dbReference type="InterPro" id="IPR011260">
    <property type="entry name" value="RNAP_asu_C"/>
</dbReference>
<dbReference type="InterPro" id="IPR036643">
    <property type="entry name" value="RNApol_insert_sf"/>
</dbReference>
<dbReference type="NCBIfam" id="NF003513">
    <property type="entry name" value="PRK05182.1-2"/>
    <property type="match status" value="1"/>
</dbReference>
<dbReference type="NCBIfam" id="NF003515">
    <property type="entry name" value="PRK05182.2-1"/>
    <property type="match status" value="1"/>
</dbReference>
<dbReference type="NCBIfam" id="NF003516">
    <property type="entry name" value="PRK05182.2-2"/>
    <property type="match status" value="1"/>
</dbReference>
<dbReference type="NCBIfam" id="NF003519">
    <property type="entry name" value="PRK05182.2-5"/>
    <property type="match status" value="1"/>
</dbReference>
<dbReference type="NCBIfam" id="TIGR02027">
    <property type="entry name" value="rpoA"/>
    <property type="match status" value="1"/>
</dbReference>
<dbReference type="Pfam" id="PF01000">
    <property type="entry name" value="RNA_pol_A_bac"/>
    <property type="match status" value="1"/>
</dbReference>
<dbReference type="Pfam" id="PF03118">
    <property type="entry name" value="RNA_pol_A_CTD"/>
    <property type="match status" value="1"/>
</dbReference>
<dbReference type="Pfam" id="PF01193">
    <property type="entry name" value="RNA_pol_L"/>
    <property type="match status" value="1"/>
</dbReference>
<dbReference type="SMART" id="SM00662">
    <property type="entry name" value="RPOLD"/>
    <property type="match status" value="1"/>
</dbReference>
<dbReference type="SUPFAM" id="SSF47789">
    <property type="entry name" value="C-terminal domain of RNA polymerase alpha subunit"/>
    <property type="match status" value="1"/>
</dbReference>
<dbReference type="SUPFAM" id="SSF56553">
    <property type="entry name" value="Insert subdomain of RNA polymerase alpha subunit"/>
    <property type="match status" value="1"/>
</dbReference>
<dbReference type="SUPFAM" id="SSF55257">
    <property type="entry name" value="RBP11-like subunits of RNA polymerase"/>
    <property type="match status" value="1"/>
</dbReference>
<name>RPOA_CLOAB</name>
<sequence length="315" mass="35416">MLEIEKPKIECVESTEDGSYGRFVVEPLERGYGITLGNSLRRILLSSLPGVAANSVRIEGVLHEFSTVKGVKEDVTELILNIKALCLKMEGEDSKVIYIDAHGPGEVTGADIRTDGSVEVINKDLHIATLDEDGKLYMEIEVNRGRGYVTQNKNKRDDMPIGTIAVDSIYSPIKRVNFTVENTRVAQITDYDKLTIEVWGNGTIRPEEAISLAAKILIEHFKLFMTLTDHADDVEIMVEKEEDKKEKVLEMTIEELDLSVRSYNCLKRAGINTVQELTQRSMEDMMKVRNLGRKSLEEVEQKLKALGLSLKLNDE</sequence>
<accession>Q97EK6</accession>
<gene>
    <name evidence="1" type="primary">rpoA</name>
    <name type="ordered locus">CA_C3104</name>
</gene>
<reference key="1">
    <citation type="journal article" date="2001" name="J. Bacteriol.">
        <title>Genome sequence and comparative analysis of the solvent-producing bacterium Clostridium acetobutylicum.</title>
        <authorList>
            <person name="Noelling J."/>
            <person name="Breton G."/>
            <person name="Omelchenko M.V."/>
            <person name="Makarova K.S."/>
            <person name="Zeng Q."/>
            <person name="Gibson R."/>
            <person name="Lee H.M."/>
            <person name="Dubois J."/>
            <person name="Qiu D."/>
            <person name="Hitti J."/>
            <person name="Wolf Y.I."/>
            <person name="Tatusov R.L."/>
            <person name="Sabathe F."/>
            <person name="Doucette-Stamm L.A."/>
            <person name="Soucaille P."/>
            <person name="Daly M.J."/>
            <person name="Bennett G.N."/>
            <person name="Koonin E.V."/>
            <person name="Smith D.R."/>
        </authorList>
    </citation>
    <scope>NUCLEOTIDE SEQUENCE [LARGE SCALE GENOMIC DNA]</scope>
    <source>
        <strain>ATCC 824 / DSM 792 / JCM 1419 / IAM 19013 / LMG 5710 / NBRC 13948 / NRRL B-527 / VKM B-1787 / 2291 / W</strain>
    </source>
</reference>
<proteinExistence type="inferred from homology"/>
<evidence type="ECO:0000255" key="1">
    <source>
        <dbReference type="HAMAP-Rule" id="MF_00059"/>
    </source>
</evidence>
<keyword id="KW-0240">DNA-directed RNA polymerase</keyword>
<keyword id="KW-0548">Nucleotidyltransferase</keyword>
<keyword id="KW-1185">Reference proteome</keyword>
<keyword id="KW-0804">Transcription</keyword>
<keyword id="KW-0808">Transferase</keyword>
<organism>
    <name type="scientific">Clostridium acetobutylicum (strain ATCC 824 / DSM 792 / JCM 1419 / IAM 19013 / LMG 5710 / NBRC 13948 / NRRL B-527 / VKM B-1787 / 2291 / W)</name>
    <dbReference type="NCBI Taxonomy" id="272562"/>
    <lineage>
        <taxon>Bacteria</taxon>
        <taxon>Bacillati</taxon>
        <taxon>Bacillota</taxon>
        <taxon>Clostridia</taxon>
        <taxon>Eubacteriales</taxon>
        <taxon>Clostridiaceae</taxon>
        <taxon>Clostridium</taxon>
    </lineage>
</organism>
<feature type="chain" id="PRO_0000175294" description="DNA-directed RNA polymerase subunit alpha">
    <location>
        <begin position="1"/>
        <end position="315"/>
    </location>
</feature>
<feature type="region of interest" description="Alpha N-terminal domain (alpha-NTD)" evidence="1">
    <location>
        <begin position="1"/>
        <end position="228"/>
    </location>
</feature>
<feature type="region of interest" description="Alpha C-terminal domain (alpha-CTD)" evidence="1">
    <location>
        <begin position="245"/>
        <end position="315"/>
    </location>
</feature>
<protein>
    <recommendedName>
        <fullName evidence="1">DNA-directed RNA polymerase subunit alpha</fullName>
        <shortName evidence="1">RNAP subunit alpha</shortName>
        <ecNumber evidence="1">2.7.7.6</ecNumber>
    </recommendedName>
    <alternativeName>
        <fullName evidence="1">RNA polymerase subunit alpha</fullName>
    </alternativeName>
    <alternativeName>
        <fullName evidence="1">Transcriptase subunit alpha</fullName>
    </alternativeName>
</protein>